<evidence type="ECO:0000255" key="1">
    <source>
        <dbReference type="HAMAP-Rule" id="MF_01035"/>
    </source>
</evidence>
<organism>
    <name type="scientific">Corynebacterium kroppenstedtii (strain DSM 44385 / JCM 11950 / CIP 105744 / CCUG 35717)</name>
    <dbReference type="NCBI Taxonomy" id="645127"/>
    <lineage>
        <taxon>Bacteria</taxon>
        <taxon>Bacillati</taxon>
        <taxon>Actinomycetota</taxon>
        <taxon>Actinomycetes</taxon>
        <taxon>Mycobacteriales</taxon>
        <taxon>Corynebacteriaceae</taxon>
        <taxon>Corynebacterium</taxon>
    </lineage>
</organism>
<protein>
    <recommendedName>
        <fullName evidence="1">3-isopropylmalate dehydrogenase</fullName>
        <ecNumber evidence="1">1.1.1.85</ecNumber>
    </recommendedName>
    <alternativeName>
        <fullName evidence="1">3-IPM-DH</fullName>
    </alternativeName>
    <alternativeName>
        <fullName evidence="1">Beta-IPM dehydrogenase</fullName>
        <shortName evidence="1">IMDH</shortName>
    </alternativeName>
</protein>
<name>LEU3_CORK4</name>
<proteinExistence type="inferred from homology"/>
<keyword id="KW-0028">Amino-acid biosynthesis</keyword>
<keyword id="KW-0100">Branched-chain amino acid biosynthesis</keyword>
<keyword id="KW-0963">Cytoplasm</keyword>
<keyword id="KW-0432">Leucine biosynthesis</keyword>
<keyword id="KW-0460">Magnesium</keyword>
<keyword id="KW-0464">Manganese</keyword>
<keyword id="KW-0479">Metal-binding</keyword>
<keyword id="KW-0520">NAD</keyword>
<keyword id="KW-0560">Oxidoreductase</keyword>
<keyword id="KW-1185">Reference proteome</keyword>
<accession>C4LJH3</accession>
<feature type="chain" id="PRO_1000213376" description="3-isopropylmalate dehydrogenase">
    <location>
        <begin position="1"/>
        <end position="342"/>
    </location>
</feature>
<feature type="binding site" evidence="1">
    <location>
        <position position="92"/>
    </location>
    <ligand>
        <name>substrate</name>
    </ligand>
</feature>
<feature type="binding site" evidence="1">
    <location>
        <position position="102"/>
    </location>
    <ligand>
        <name>substrate</name>
    </ligand>
</feature>
<feature type="binding site" evidence="1">
    <location>
        <position position="126"/>
    </location>
    <ligand>
        <name>substrate</name>
    </ligand>
</feature>
<feature type="binding site" evidence="1">
    <location>
        <position position="216"/>
    </location>
    <ligand>
        <name>Mg(2+)</name>
        <dbReference type="ChEBI" id="CHEBI:18420"/>
    </ligand>
</feature>
<feature type="binding site" evidence="1">
    <location>
        <position position="216"/>
    </location>
    <ligand>
        <name>substrate</name>
    </ligand>
</feature>
<feature type="binding site" evidence="1">
    <location>
        <position position="240"/>
    </location>
    <ligand>
        <name>Mg(2+)</name>
        <dbReference type="ChEBI" id="CHEBI:18420"/>
    </ligand>
</feature>
<feature type="binding site" evidence="1">
    <location>
        <position position="244"/>
    </location>
    <ligand>
        <name>Mg(2+)</name>
        <dbReference type="ChEBI" id="CHEBI:18420"/>
    </ligand>
</feature>
<feature type="binding site" evidence="1">
    <location>
        <begin position="276"/>
        <end position="288"/>
    </location>
    <ligand>
        <name>NAD(+)</name>
        <dbReference type="ChEBI" id="CHEBI:57540"/>
    </ligand>
</feature>
<feature type="site" description="Important for catalysis" evidence="1">
    <location>
        <position position="133"/>
    </location>
</feature>
<feature type="site" description="Important for catalysis" evidence="1">
    <location>
        <position position="183"/>
    </location>
</feature>
<sequence length="342" mass="36496">MKLAVIPGDGIGTEVTAEALKVMRAALAGSGESIETTDYDLGARRYLRNGELLTDDDLASLREHDAILLGAVGDPRTVPSGVLERGLLLKMRFVLDHHVNLRPSVLYPGVTSPLSDPGKVDFIVVREGTEGLYAGNGGSIRVDTPHEVANETSVNTRYGVERVVRYAFDRAQERRKKLTLVHKTNVLVYAGGLWQRTVDQVAQEYLDVTVDYCHIDAATIYMVTDPSRFDVIVTDNLFGDIITDLAGAVTGGIGLAASGNIDATGTNPSMFEPVHGSAPDIAGKGIADPTAAILSGALLFRHLGKTDEADAIEAAVRNDVASRDGSIRTEEVGTRIANSLDS</sequence>
<comment type="function">
    <text evidence="1">Catalyzes the oxidation of 3-carboxy-2-hydroxy-4-methylpentanoate (3-isopropylmalate) to 3-carboxy-4-methyl-2-oxopentanoate. The product decarboxylates to 4-methyl-2 oxopentanoate.</text>
</comment>
<comment type="catalytic activity">
    <reaction evidence="1">
        <text>(2R,3S)-3-isopropylmalate + NAD(+) = 4-methyl-2-oxopentanoate + CO2 + NADH</text>
        <dbReference type="Rhea" id="RHEA:32271"/>
        <dbReference type="ChEBI" id="CHEBI:16526"/>
        <dbReference type="ChEBI" id="CHEBI:17865"/>
        <dbReference type="ChEBI" id="CHEBI:35121"/>
        <dbReference type="ChEBI" id="CHEBI:57540"/>
        <dbReference type="ChEBI" id="CHEBI:57945"/>
        <dbReference type="EC" id="1.1.1.85"/>
    </reaction>
</comment>
<comment type="cofactor">
    <cofactor evidence="1">
        <name>Mg(2+)</name>
        <dbReference type="ChEBI" id="CHEBI:18420"/>
    </cofactor>
    <cofactor evidence="1">
        <name>Mn(2+)</name>
        <dbReference type="ChEBI" id="CHEBI:29035"/>
    </cofactor>
    <text evidence="1">Binds 1 Mg(2+) or Mn(2+) ion per subunit.</text>
</comment>
<comment type="pathway">
    <text evidence="1">Amino-acid biosynthesis; L-leucine biosynthesis; L-leucine from 3-methyl-2-oxobutanoate: step 3/4.</text>
</comment>
<comment type="subunit">
    <text evidence="1">Homodimer.</text>
</comment>
<comment type="subcellular location">
    <subcellularLocation>
        <location evidence="1">Cytoplasm</location>
    </subcellularLocation>
</comment>
<comment type="similarity">
    <text evidence="1">Belongs to the isocitrate and isopropylmalate dehydrogenases family. LeuB type 2 subfamily.</text>
</comment>
<reference key="1">
    <citation type="journal article" date="2008" name="J. Biotechnol.">
        <title>Ultrafast pyrosequencing of Corynebacterium kroppenstedtii DSM44385 revealed insights into the physiology of a lipophilic corynebacterium that lacks mycolic acids.</title>
        <authorList>
            <person name="Tauch A."/>
            <person name="Schneider J."/>
            <person name="Szczepanowski R."/>
            <person name="Tilker A."/>
            <person name="Viehoever P."/>
            <person name="Gartemann K.-H."/>
            <person name="Arnold W."/>
            <person name="Blom J."/>
            <person name="Brinkrolf K."/>
            <person name="Brune I."/>
            <person name="Goetker S."/>
            <person name="Weisshaar B."/>
            <person name="Goesmann A."/>
            <person name="Droege M."/>
            <person name="Puehler A."/>
        </authorList>
    </citation>
    <scope>NUCLEOTIDE SEQUENCE [LARGE SCALE GENOMIC DNA]</scope>
    <source>
        <strain>DSM 44385 / JCM 11950 / CIP 105744 / CCUG 35717</strain>
    </source>
</reference>
<gene>
    <name evidence="1" type="primary">leuB</name>
    <name type="ordered locus">ckrop_1234</name>
</gene>
<dbReference type="EC" id="1.1.1.85" evidence="1"/>
<dbReference type="EMBL" id="CP001620">
    <property type="protein sequence ID" value="ACR17978.1"/>
    <property type="molecule type" value="Genomic_DNA"/>
</dbReference>
<dbReference type="RefSeq" id="WP_012731865.1">
    <property type="nucleotide sequence ID" value="NC_012704.1"/>
</dbReference>
<dbReference type="SMR" id="C4LJH3"/>
<dbReference type="STRING" id="645127.ckrop_1234"/>
<dbReference type="KEGG" id="ckp:ckrop_1234"/>
<dbReference type="eggNOG" id="COG0473">
    <property type="taxonomic scope" value="Bacteria"/>
</dbReference>
<dbReference type="HOGENOM" id="CLU_031953_0_1_11"/>
<dbReference type="OrthoDB" id="5289857at2"/>
<dbReference type="UniPathway" id="UPA00048">
    <property type="reaction ID" value="UER00072"/>
</dbReference>
<dbReference type="Proteomes" id="UP000001473">
    <property type="component" value="Chromosome"/>
</dbReference>
<dbReference type="GO" id="GO:0005737">
    <property type="term" value="C:cytoplasm"/>
    <property type="evidence" value="ECO:0007669"/>
    <property type="project" value="UniProtKB-SubCell"/>
</dbReference>
<dbReference type="GO" id="GO:0003862">
    <property type="term" value="F:3-isopropylmalate dehydrogenase activity"/>
    <property type="evidence" value="ECO:0007669"/>
    <property type="project" value="UniProtKB-UniRule"/>
</dbReference>
<dbReference type="GO" id="GO:0000287">
    <property type="term" value="F:magnesium ion binding"/>
    <property type="evidence" value="ECO:0007669"/>
    <property type="project" value="InterPro"/>
</dbReference>
<dbReference type="GO" id="GO:0051287">
    <property type="term" value="F:NAD binding"/>
    <property type="evidence" value="ECO:0007669"/>
    <property type="project" value="InterPro"/>
</dbReference>
<dbReference type="GO" id="GO:0009098">
    <property type="term" value="P:L-leucine biosynthetic process"/>
    <property type="evidence" value="ECO:0007669"/>
    <property type="project" value="UniProtKB-UniRule"/>
</dbReference>
<dbReference type="Gene3D" id="3.40.718.10">
    <property type="entry name" value="Isopropylmalate Dehydrogenase"/>
    <property type="match status" value="1"/>
</dbReference>
<dbReference type="HAMAP" id="MF_01035">
    <property type="entry name" value="LeuB_type2"/>
    <property type="match status" value="1"/>
</dbReference>
<dbReference type="InterPro" id="IPR050501">
    <property type="entry name" value="ICDH/IPMDH"/>
</dbReference>
<dbReference type="InterPro" id="IPR019818">
    <property type="entry name" value="IsoCit/isopropylmalate_DH_CS"/>
</dbReference>
<dbReference type="InterPro" id="IPR024084">
    <property type="entry name" value="IsoPropMal-DH-like_dom"/>
</dbReference>
<dbReference type="InterPro" id="IPR023698">
    <property type="entry name" value="LeuB_actb"/>
</dbReference>
<dbReference type="NCBIfam" id="NF002898">
    <property type="entry name" value="PRK03437.1"/>
    <property type="match status" value="1"/>
</dbReference>
<dbReference type="PANTHER" id="PTHR43275">
    <property type="entry name" value="D-MALATE DEHYDROGENASE [DECARBOXYLATING]"/>
    <property type="match status" value="1"/>
</dbReference>
<dbReference type="PANTHER" id="PTHR43275:SF1">
    <property type="entry name" value="D-MALATE DEHYDROGENASE [DECARBOXYLATING]"/>
    <property type="match status" value="1"/>
</dbReference>
<dbReference type="Pfam" id="PF00180">
    <property type="entry name" value="Iso_dh"/>
    <property type="match status" value="1"/>
</dbReference>
<dbReference type="SMART" id="SM01329">
    <property type="entry name" value="Iso_dh"/>
    <property type="match status" value="1"/>
</dbReference>
<dbReference type="SUPFAM" id="SSF53659">
    <property type="entry name" value="Isocitrate/Isopropylmalate dehydrogenase-like"/>
    <property type="match status" value="1"/>
</dbReference>
<dbReference type="PROSITE" id="PS00470">
    <property type="entry name" value="IDH_IMDH"/>
    <property type="match status" value="1"/>
</dbReference>